<keyword id="KW-1003">Cell membrane</keyword>
<keyword id="KW-0472">Membrane</keyword>
<keyword id="KW-0812">Transmembrane</keyword>
<keyword id="KW-1133">Transmembrane helix</keyword>
<keyword id="KW-0843">Virulence</keyword>
<protein>
    <recommendedName>
        <fullName>Surface presentation of antigens protein SpaQ</fullName>
    </recommendedName>
</protein>
<evidence type="ECO:0000255" key="1"/>
<evidence type="ECO:0000305" key="2"/>
<feature type="chain" id="PRO_0000129108" description="Surface presentation of antigens protein SpaQ">
    <location>
        <begin position="1"/>
        <end position="86"/>
    </location>
</feature>
<feature type="transmembrane region" description="Helical" evidence="1">
    <location>
        <begin position="16"/>
        <end position="36"/>
    </location>
</feature>
<feature type="transmembrane region" description="Helical" evidence="1">
    <location>
        <begin position="53"/>
        <end position="73"/>
    </location>
</feature>
<proteinExistence type="inferred from homology"/>
<dbReference type="EMBL" id="U29363">
    <property type="protein sequence ID" value="AAC43862.1"/>
    <property type="molecule type" value="Genomic_DNA"/>
</dbReference>
<dbReference type="EMBL" id="AL513382">
    <property type="protein sequence ID" value="CAD05996.1"/>
    <property type="molecule type" value="Genomic_DNA"/>
</dbReference>
<dbReference type="EMBL" id="AE014613">
    <property type="protein sequence ID" value="AAO70352.1"/>
    <property type="molecule type" value="Genomic_DNA"/>
</dbReference>
<dbReference type="PIR" id="AE0851">
    <property type="entry name" value="AE0851"/>
</dbReference>
<dbReference type="RefSeq" id="NP_457283.1">
    <property type="nucleotide sequence ID" value="NC_003198.1"/>
</dbReference>
<dbReference type="RefSeq" id="WP_000342503.1">
    <property type="nucleotide sequence ID" value="NZ_WSUR01000005.1"/>
</dbReference>
<dbReference type="SMR" id="P0A1L8"/>
<dbReference type="STRING" id="220341.gene:17586906"/>
<dbReference type="KEGG" id="stt:t2791"/>
<dbReference type="KEGG" id="sty:STY3012"/>
<dbReference type="PATRIC" id="fig|220341.7.peg.3066"/>
<dbReference type="eggNOG" id="COG4794">
    <property type="taxonomic scope" value="Bacteria"/>
</dbReference>
<dbReference type="HOGENOM" id="CLU_164516_1_2_6"/>
<dbReference type="OMA" id="GWYGETL"/>
<dbReference type="OrthoDB" id="9806440at2"/>
<dbReference type="Proteomes" id="UP000000541">
    <property type="component" value="Chromosome"/>
</dbReference>
<dbReference type="Proteomes" id="UP000002670">
    <property type="component" value="Chromosome"/>
</dbReference>
<dbReference type="GO" id="GO:0005886">
    <property type="term" value="C:plasma membrane"/>
    <property type="evidence" value="ECO:0007669"/>
    <property type="project" value="UniProtKB-SubCell"/>
</dbReference>
<dbReference type="GO" id="GO:0009306">
    <property type="term" value="P:protein secretion"/>
    <property type="evidence" value="ECO:0007669"/>
    <property type="project" value="InterPro"/>
</dbReference>
<dbReference type="InterPro" id="IPR002191">
    <property type="entry name" value="Bac_export_3"/>
</dbReference>
<dbReference type="InterPro" id="IPR006306">
    <property type="entry name" value="T3SS_HrpO"/>
</dbReference>
<dbReference type="NCBIfam" id="TIGR01403">
    <property type="entry name" value="fliQ_rel_III"/>
    <property type="match status" value="1"/>
</dbReference>
<dbReference type="NCBIfam" id="NF011861">
    <property type="entry name" value="PRK15333.1"/>
    <property type="match status" value="1"/>
</dbReference>
<dbReference type="PANTHER" id="PTHR34040">
    <property type="entry name" value="FLAGELLAR BIOSYNTHETIC PROTEIN FLIQ"/>
    <property type="match status" value="1"/>
</dbReference>
<dbReference type="PANTHER" id="PTHR34040:SF7">
    <property type="entry name" value="SURFACE PRESENTATION OF ANTIGENS PROTEIN SPAQ"/>
    <property type="match status" value="1"/>
</dbReference>
<dbReference type="Pfam" id="PF01313">
    <property type="entry name" value="Bac_export_3"/>
    <property type="match status" value="1"/>
</dbReference>
<dbReference type="PRINTS" id="PR00952">
    <property type="entry name" value="TYPE3IMQPROT"/>
</dbReference>
<reference key="1">
    <citation type="journal article" date="1995" name="Proc. Natl. Acad. Sci. U.S.A.">
        <title>Relationship between evolutionary rate and cellular location among the Inv/Spa invasion proteins of Salmonella enterica.</title>
        <authorList>
            <person name="Li J."/>
            <person name="Ochman H."/>
            <person name="Groisman E.A."/>
            <person name="Boyd E.F."/>
            <person name="Solomon F."/>
            <person name="Nelson K."/>
            <person name="Selander R.K."/>
        </authorList>
    </citation>
    <scope>NUCLEOTIDE SEQUENCE [GENOMIC DNA]</scope>
    <source>
        <strain>s3333</strain>
    </source>
</reference>
<reference key="2">
    <citation type="journal article" date="2001" name="Nature">
        <title>Complete genome sequence of a multiple drug resistant Salmonella enterica serovar Typhi CT18.</title>
        <authorList>
            <person name="Parkhill J."/>
            <person name="Dougan G."/>
            <person name="James K.D."/>
            <person name="Thomson N.R."/>
            <person name="Pickard D."/>
            <person name="Wain J."/>
            <person name="Churcher C.M."/>
            <person name="Mungall K.L."/>
            <person name="Bentley S.D."/>
            <person name="Holden M.T.G."/>
            <person name="Sebaihia M."/>
            <person name="Baker S."/>
            <person name="Basham D."/>
            <person name="Brooks K."/>
            <person name="Chillingworth T."/>
            <person name="Connerton P."/>
            <person name="Cronin A."/>
            <person name="Davis P."/>
            <person name="Davies R.M."/>
            <person name="Dowd L."/>
            <person name="White N."/>
            <person name="Farrar J."/>
            <person name="Feltwell T."/>
            <person name="Hamlin N."/>
            <person name="Haque A."/>
            <person name="Hien T.T."/>
            <person name="Holroyd S."/>
            <person name="Jagels K."/>
            <person name="Krogh A."/>
            <person name="Larsen T.S."/>
            <person name="Leather S."/>
            <person name="Moule S."/>
            <person name="O'Gaora P."/>
            <person name="Parry C."/>
            <person name="Quail M.A."/>
            <person name="Rutherford K.M."/>
            <person name="Simmonds M."/>
            <person name="Skelton J."/>
            <person name="Stevens K."/>
            <person name="Whitehead S."/>
            <person name="Barrell B.G."/>
        </authorList>
    </citation>
    <scope>NUCLEOTIDE SEQUENCE [LARGE SCALE GENOMIC DNA]</scope>
    <source>
        <strain>CT18</strain>
    </source>
</reference>
<reference key="3">
    <citation type="journal article" date="2003" name="J. Bacteriol.">
        <title>Comparative genomics of Salmonella enterica serovar Typhi strains Ty2 and CT18.</title>
        <authorList>
            <person name="Deng W."/>
            <person name="Liou S.-R."/>
            <person name="Plunkett G. III"/>
            <person name="Mayhew G.F."/>
            <person name="Rose D.J."/>
            <person name="Burland V."/>
            <person name="Kodoyianni V."/>
            <person name="Schwartz D.C."/>
            <person name="Blattner F.R."/>
        </authorList>
    </citation>
    <scope>NUCLEOTIDE SEQUENCE [LARGE SCALE GENOMIC DNA]</scope>
    <source>
        <strain>ATCC 700931 / Ty2</strain>
    </source>
</reference>
<gene>
    <name type="primary">spaQ</name>
    <name type="ordered locus">STY3012</name>
    <name type="ordered locus">t2791</name>
</gene>
<accession>P0A1L8</accession>
<accession>P40704</accession>
<accession>Q54011</accession>
<accession>Q54013</accession>
<accession>Q57117</accession>
<accession>Q57533</accession>
<sequence>MDDLVFAGNKALYLVLILSGWPTIVATIIGLLVGLFQTVTQLQEQTLPFGIKLLGVCLCLFLLSGWYGEVLLSYGRQVIFLALAKG</sequence>
<comment type="function">
    <text>Involved in a secretory pathway responsible for the surface presentation of determinants needed for the entry of Salmonella species into mammalian cells.</text>
</comment>
<comment type="subcellular location">
    <subcellularLocation>
        <location evidence="2">Cell membrane</location>
        <topology evidence="2">Multi-pass membrane protein</topology>
    </subcellularLocation>
</comment>
<comment type="similarity">
    <text evidence="2">Belongs to the FliQ/MopD/SpaQ family.</text>
</comment>
<organism>
    <name type="scientific">Salmonella typhi</name>
    <dbReference type="NCBI Taxonomy" id="90370"/>
    <lineage>
        <taxon>Bacteria</taxon>
        <taxon>Pseudomonadati</taxon>
        <taxon>Pseudomonadota</taxon>
        <taxon>Gammaproteobacteria</taxon>
        <taxon>Enterobacterales</taxon>
        <taxon>Enterobacteriaceae</taxon>
        <taxon>Salmonella</taxon>
    </lineage>
</organism>
<name>SPAQ_SALTI</name>